<keyword id="KW-0378">Hydrolase</keyword>
<proteinExistence type="inferred from homology"/>
<name>GLSA_SHESA</name>
<gene>
    <name evidence="1" type="primary">glsA</name>
    <name type="ordered locus">Shewana3_1184</name>
</gene>
<organism>
    <name type="scientific">Shewanella sp. (strain ANA-3)</name>
    <dbReference type="NCBI Taxonomy" id="94122"/>
    <lineage>
        <taxon>Bacteria</taxon>
        <taxon>Pseudomonadati</taxon>
        <taxon>Pseudomonadota</taxon>
        <taxon>Gammaproteobacteria</taxon>
        <taxon>Alteromonadales</taxon>
        <taxon>Shewanellaceae</taxon>
        <taxon>Shewanella</taxon>
    </lineage>
</organism>
<protein>
    <recommendedName>
        <fullName evidence="1">Glutaminase</fullName>
        <ecNumber evidence="1">3.5.1.2</ecNumber>
    </recommendedName>
</protein>
<evidence type="ECO:0000255" key="1">
    <source>
        <dbReference type="HAMAP-Rule" id="MF_00313"/>
    </source>
</evidence>
<accession>A0KUF0</accession>
<reference key="1">
    <citation type="submission" date="2006-09" db="EMBL/GenBank/DDBJ databases">
        <title>Complete sequence of chromosome 1 of Shewanella sp. ANA-3.</title>
        <authorList>
            <person name="Copeland A."/>
            <person name="Lucas S."/>
            <person name="Lapidus A."/>
            <person name="Barry K."/>
            <person name="Detter J.C."/>
            <person name="Glavina del Rio T."/>
            <person name="Hammon N."/>
            <person name="Israni S."/>
            <person name="Dalin E."/>
            <person name="Tice H."/>
            <person name="Pitluck S."/>
            <person name="Chertkov O."/>
            <person name="Brettin T."/>
            <person name="Bruce D."/>
            <person name="Han C."/>
            <person name="Tapia R."/>
            <person name="Gilna P."/>
            <person name="Schmutz J."/>
            <person name="Larimer F."/>
            <person name="Land M."/>
            <person name="Hauser L."/>
            <person name="Kyrpides N."/>
            <person name="Kim E."/>
            <person name="Newman D."/>
            <person name="Salticov C."/>
            <person name="Konstantinidis K."/>
            <person name="Klappenback J."/>
            <person name="Tiedje J."/>
            <person name="Richardson P."/>
        </authorList>
    </citation>
    <scope>NUCLEOTIDE SEQUENCE [LARGE SCALE GENOMIC DNA]</scope>
    <source>
        <strain>ANA-3</strain>
    </source>
</reference>
<dbReference type="EC" id="3.5.1.2" evidence="1"/>
<dbReference type="EMBL" id="CP000469">
    <property type="protein sequence ID" value="ABK47419.1"/>
    <property type="molecule type" value="Genomic_DNA"/>
</dbReference>
<dbReference type="SMR" id="A0KUF0"/>
<dbReference type="STRING" id="94122.Shewana3_1184"/>
<dbReference type="KEGG" id="shn:Shewana3_1184"/>
<dbReference type="eggNOG" id="COG2066">
    <property type="taxonomic scope" value="Bacteria"/>
</dbReference>
<dbReference type="HOGENOM" id="CLU_027932_1_1_6"/>
<dbReference type="OrthoDB" id="9788822at2"/>
<dbReference type="Proteomes" id="UP000002589">
    <property type="component" value="Chromosome"/>
</dbReference>
<dbReference type="GO" id="GO:0004359">
    <property type="term" value="F:glutaminase activity"/>
    <property type="evidence" value="ECO:0007669"/>
    <property type="project" value="UniProtKB-UniRule"/>
</dbReference>
<dbReference type="GO" id="GO:0006537">
    <property type="term" value="P:glutamate biosynthetic process"/>
    <property type="evidence" value="ECO:0007669"/>
    <property type="project" value="TreeGrafter"/>
</dbReference>
<dbReference type="GO" id="GO:0006543">
    <property type="term" value="P:glutamine catabolic process"/>
    <property type="evidence" value="ECO:0007669"/>
    <property type="project" value="TreeGrafter"/>
</dbReference>
<dbReference type="FunFam" id="3.40.710.10:FF:000005">
    <property type="entry name" value="Glutaminase"/>
    <property type="match status" value="1"/>
</dbReference>
<dbReference type="Gene3D" id="3.40.710.10">
    <property type="entry name" value="DD-peptidase/beta-lactamase superfamily"/>
    <property type="match status" value="1"/>
</dbReference>
<dbReference type="HAMAP" id="MF_00313">
    <property type="entry name" value="Glutaminase"/>
    <property type="match status" value="1"/>
</dbReference>
<dbReference type="InterPro" id="IPR012338">
    <property type="entry name" value="Beta-lactam/transpept-like"/>
</dbReference>
<dbReference type="InterPro" id="IPR015868">
    <property type="entry name" value="Glutaminase"/>
</dbReference>
<dbReference type="NCBIfam" id="TIGR03814">
    <property type="entry name" value="Gln_ase"/>
    <property type="match status" value="1"/>
</dbReference>
<dbReference type="NCBIfam" id="NF002132">
    <property type="entry name" value="PRK00971.1-1"/>
    <property type="match status" value="1"/>
</dbReference>
<dbReference type="NCBIfam" id="NF002133">
    <property type="entry name" value="PRK00971.1-2"/>
    <property type="match status" value="1"/>
</dbReference>
<dbReference type="PANTHER" id="PTHR12544">
    <property type="entry name" value="GLUTAMINASE"/>
    <property type="match status" value="1"/>
</dbReference>
<dbReference type="PANTHER" id="PTHR12544:SF29">
    <property type="entry name" value="GLUTAMINASE"/>
    <property type="match status" value="1"/>
</dbReference>
<dbReference type="Pfam" id="PF04960">
    <property type="entry name" value="Glutaminase"/>
    <property type="match status" value="1"/>
</dbReference>
<dbReference type="SUPFAM" id="SSF56601">
    <property type="entry name" value="beta-lactamase/transpeptidase-like"/>
    <property type="match status" value="1"/>
</dbReference>
<comment type="catalytic activity">
    <reaction evidence="1">
        <text>L-glutamine + H2O = L-glutamate + NH4(+)</text>
        <dbReference type="Rhea" id="RHEA:15889"/>
        <dbReference type="ChEBI" id="CHEBI:15377"/>
        <dbReference type="ChEBI" id="CHEBI:28938"/>
        <dbReference type="ChEBI" id="CHEBI:29985"/>
        <dbReference type="ChEBI" id="CHEBI:58359"/>
        <dbReference type="EC" id="3.5.1.2"/>
    </reaction>
</comment>
<comment type="subunit">
    <text evidence="1">Homotetramer.</text>
</comment>
<comment type="similarity">
    <text evidence="1">Belongs to the glutaminase family.</text>
</comment>
<sequence>MPEQALLEEVVDKVRPLLGQGKVANYIPALANVDAGKLGIAVTTIDGETIGAGDYLEPFSIQSISKVFSLTLALTLYEETEIWSRVGKEPSGHSFNSLVQVELERGKPRNPFINAGALVIADLLQSRLGAPKHRMLELVRALSQNDKVCFDKQVADSEYQHSARNAAIAYLMKSFGNFQGDVDTVLRTYFHYCALKMNCADLSRAMLYLANRGKTLDGTELISQVQTRQLNALLATSGLYDGAGEFAYRVGMPGKSGVGGGIIAVIPGELSVCVWSPELDNQGNSLAGTAMLEHLSQRLGRSIF</sequence>
<feature type="chain" id="PRO_1000048360" description="Glutaminase">
    <location>
        <begin position="1"/>
        <end position="304"/>
    </location>
</feature>
<feature type="binding site" evidence="1">
    <location>
        <position position="63"/>
    </location>
    <ligand>
        <name>substrate</name>
    </ligand>
</feature>
<feature type="binding site" evidence="1">
    <location>
        <position position="114"/>
    </location>
    <ligand>
        <name>substrate</name>
    </ligand>
</feature>
<feature type="binding site" evidence="1">
    <location>
        <position position="158"/>
    </location>
    <ligand>
        <name>substrate</name>
    </ligand>
</feature>
<feature type="binding site" evidence="1">
    <location>
        <position position="165"/>
    </location>
    <ligand>
        <name>substrate</name>
    </ligand>
</feature>
<feature type="binding site" evidence="1">
    <location>
        <position position="189"/>
    </location>
    <ligand>
        <name>substrate</name>
    </ligand>
</feature>
<feature type="binding site" evidence="1">
    <location>
        <position position="240"/>
    </location>
    <ligand>
        <name>substrate</name>
    </ligand>
</feature>
<feature type="binding site" evidence="1">
    <location>
        <position position="258"/>
    </location>
    <ligand>
        <name>substrate</name>
    </ligand>
</feature>